<reference key="1">
    <citation type="journal article" date="2007" name="PLoS Genet.">
        <title>Patterns and implications of gene gain and loss in the evolution of Prochlorococcus.</title>
        <authorList>
            <person name="Kettler G.C."/>
            <person name="Martiny A.C."/>
            <person name="Huang K."/>
            <person name="Zucker J."/>
            <person name="Coleman M.L."/>
            <person name="Rodrigue S."/>
            <person name="Chen F."/>
            <person name="Lapidus A."/>
            <person name="Ferriera S."/>
            <person name="Johnson J."/>
            <person name="Steglich C."/>
            <person name="Church G.M."/>
            <person name="Richardson P."/>
            <person name="Chisholm S.W."/>
        </authorList>
    </citation>
    <scope>NUCLEOTIDE SEQUENCE [LARGE SCALE GENOMIC DNA]</scope>
    <source>
        <strain>NATL2A</strain>
    </source>
</reference>
<comment type="function">
    <text evidence="1">Catalyzes the transfer of a dimethylallyl group onto the adenine at position 37 in tRNAs that read codons beginning with uridine, leading to the formation of N6-(dimethylallyl)adenosine (i(6)A).</text>
</comment>
<comment type="catalytic activity">
    <reaction evidence="1">
        <text>adenosine(37) in tRNA + dimethylallyl diphosphate = N(6)-dimethylallyladenosine(37) in tRNA + diphosphate</text>
        <dbReference type="Rhea" id="RHEA:26482"/>
        <dbReference type="Rhea" id="RHEA-COMP:10162"/>
        <dbReference type="Rhea" id="RHEA-COMP:10375"/>
        <dbReference type="ChEBI" id="CHEBI:33019"/>
        <dbReference type="ChEBI" id="CHEBI:57623"/>
        <dbReference type="ChEBI" id="CHEBI:74411"/>
        <dbReference type="ChEBI" id="CHEBI:74415"/>
        <dbReference type="EC" id="2.5.1.75"/>
    </reaction>
</comment>
<comment type="cofactor">
    <cofactor evidence="1">
        <name>Mg(2+)</name>
        <dbReference type="ChEBI" id="CHEBI:18420"/>
    </cofactor>
</comment>
<comment type="subunit">
    <text evidence="1">Monomer.</text>
</comment>
<comment type="similarity">
    <text evidence="1">Belongs to the IPP transferase family.</text>
</comment>
<name>MIAA_PROMT</name>
<organism>
    <name type="scientific">Prochlorococcus marinus (strain NATL2A)</name>
    <dbReference type="NCBI Taxonomy" id="59920"/>
    <lineage>
        <taxon>Bacteria</taxon>
        <taxon>Bacillati</taxon>
        <taxon>Cyanobacteriota</taxon>
        <taxon>Cyanophyceae</taxon>
        <taxon>Synechococcales</taxon>
        <taxon>Prochlorococcaceae</taxon>
        <taxon>Prochlorococcus</taxon>
    </lineage>
</organism>
<evidence type="ECO:0000255" key="1">
    <source>
        <dbReference type="HAMAP-Rule" id="MF_00185"/>
    </source>
</evidence>
<feature type="chain" id="PRO_1000020638" description="tRNA dimethylallyltransferase">
    <location>
        <begin position="1"/>
        <end position="299"/>
    </location>
</feature>
<feature type="region of interest" description="Interaction with substrate tRNA" evidence="1">
    <location>
        <begin position="38"/>
        <end position="41"/>
    </location>
</feature>
<feature type="binding site" evidence="1">
    <location>
        <begin position="13"/>
        <end position="20"/>
    </location>
    <ligand>
        <name>ATP</name>
        <dbReference type="ChEBI" id="CHEBI:30616"/>
    </ligand>
</feature>
<feature type="binding site" evidence="1">
    <location>
        <begin position="15"/>
        <end position="20"/>
    </location>
    <ligand>
        <name>substrate</name>
    </ligand>
</feature>
<feature type="site" description="Interaction with substrate tRNA" evidence="1">
    <location>
        <position position="104"/>
    </location>
</feature>
<proteinExistence type="inferred from homology"/>
<dbReference type="EC" id="2.5.1.75" evidence="1"/>
<dbReference type="EMBL" id="CP000095">
    <property type="protein sequence ID" value="AAZ58704.1"/>
    <property type="molecule type" value="Genomic_DNA"/>
</dbReference>
<dbReference type="RefSeq" id="WP_011295558.1">
    <property type="nucleotide sequence ID" value="NC_007335.2"/>
</dbReference>
<dbReference type="SMR" id="Q46IH4"/>
<dbReference type="STRING" id="59920.PMN2A_1214"/>
<dbReference type="KEGG" id="pmn:PMN2A_1214"/>
<dbReference type="HOGENOM" id="CLU_032616_0_1_3"/>
<dbReference type="OrthoDB" id="9776390at2"/>
<dbReference type="PhylomeDB" id="Q46IH4"/>
<dbReference type="Proteomes" id="UP000002535">
    <property type="component" value="Chromosome"/>
</dbReference>
<dbReference type="GO" id="GO:0005524">
    <property type="term" value="F:ATP binding"/>
    <property type="evidence" value="ECO:0007669"/>
    <property type="project" value="UniProtKB-UniRule"/>
</dbReference>
<dbReference type="GO" id="GO:0052381">
    <property type="term" value="F:tRNA dimethylallyltransferase activity"/>
    <property type="evidence" value="ECO:0007669"/>
    <property type="project" value="UniProtKB-UniRule"/>
</dbReference>
<dbReference type="GO" id="GO:0006400">
    <property type="term" value="P:tRNA modification"/>
    <property type="evidence" value="ECO:0007669"/>
    <property type="project" value="TreeGrafter"/>
</dbReference>
<dbReference type="Gene3D" id="1.10.20.140">
    <property type="match status" value="1"/>
</dbReference>
<dbReference type="Gene3D" id="3.40.50.300">
    <property type="entry name" value="P-loop containing nucleotide triphosphate hydrolases"/>
    <property type="match status" value="1"/>
</dbReference>
<dbReference type="HAMAP" id="MF_00185">
    <property type="entry name" value="IPP_trans"/>
    <property type="match status" value="1"/>
</dbReference>
<dbReference type="InterPro" id="IPR039657">
    <property type="entry name" value="Dimethylallyltransferase"/>
</dbReference>
<dbReference type="InterPro" id="IPR018022">
    <property type="entry name" value="IPT"/>
</dbReference>
<dbReference type="InterPro" id="IPR027417">
    <property type="entry name" value="P-loop_NTPase"/>
</dbReference>
<dbReference type="NCBIfam" id="TIGR00174">
    <property type="entry name" value="miaA"/>
    <property type="match status" value="1"/>
</dbReference>
<dbReference type="PANTHER" id="PTHR11088">
    <property type="entry name" value="TRNA DIMETHYLALLYLTRANSFERASE"/>
    <property type="match status" value="1"/>
</dbReference>
<dbReference type="PANTHER" id="PTHR11088:SF60">
    <property type="entry name" value="TRNA DIMETHYLALLYLTRANSFERASE"/>
    <property type="match status" value="1"/>
</dbReference>
<dbReference type="Pfam" id="PF01715">
    <property type="entry name" value="IPPT"/>
    <property type="match status" value="1"/>
</dbReference>
<dbReference type="SUPFAM" id="SSF52540">
    <property type="entry name" value="P-loop containing nucleoside triphosphate hydrolases"/>
    <property type="match status" value="2"/>
</dbReference>
<sequence length="299" mass="33854">MQPNKPLVVALMGPTASGKTELAIDIAKKINSNIHNIDSRQIYIDMDIGTAKPTAVQQSQVNHFLIDICLPSKPINLHDFQSIAKTSIERDLEKKGLTLLVGGSGLYLQALIGGLNPPAVPPQKFLRDQLKKIDKAERHKLLKLCDPFSAQRIHPEDSIRIIRALEVFYATGRMFSKAKNMRPTPWRVLELGLNPENLTSRIQLRTREMYKKGLVEETGDLINKYGNNLQLLKTIGYGEARSMINGKINYEEALEITIKRTCQLAKRQKTWFRNKHNSKWLNDENALPEALASIYEFLG</sequence>
<protein>
    <recommendedName>
        <fullName evidence="1">tRNA dimethylallyltransferase</fullName>
        <ecNumber evidence="1">2.5.1.75</ecNumber>
    </recommendedName>
    <alternativeName>
        <fullName evidence="1">Dimethylallyl diphosphate:tRNA dimethylallyltransferase</fullName>
        <shortName evidence="1">DMAPP:tRNA dimethylallyltransferase</shortName>
        <shortName evidence="1">DMATase</shortName>
    </alternativeName>
    <alternativeName>
        <fullName evidence="1">Isopentenyl-diphosphate:tRNA isopentenyltransferase</fullName>
        <shortName evidence="1">IPP transferase</shortName>
        <shortName evidence="1">IPPT</shortName>
        <shortName evidence="1">IPTase</shortName>
    </alternativeName>
</protein>
<accession>Q46IH4</accession>
<gene>
    <name evidence="1" type="primary">miaA</name>
    <name type="ordered locus">PMN2A_1214</name>
</gene>
<keyword id="KW-0067">ATP-binding</keyword>
<keyword id="KW-0460">Magnesium</keyword>
<keyword id="KW-0547">Nucleotide-binding</keyword>
<keyword id="KW-1185">Reference proteome</keyword>
<keyword id="KW-0808">Transferase</keyword>
<keyword id="KW-0819">tRNA processing</keyword>